<sequence>MHTDEKIYEGKAKVLYPTDDPQVFQVHFKDDATAFNAQKRGAIAGKGRINCTISAHLFQMLAKAGIANHFLSQPAPDQMLVRAVQIIPVEVVVRNIAAGSLCQQTGLPLGTPLKKPLVEFYYKNDDLGDPLLTRERLLLLELATAAEIEQLEALARQINEHLIVFFQQCGITLVDFKLEFGRDQNQHILLADEISPDTCRLWNQSETDPEQRVMDKDRFRRDLGNVESAYEQVMARVLAQPL</sequence>
<reference key="1">
    <citation type="journal article" date="2011" name="MBio">
        <title>Novel metabolic attributes of the genus Cyanothece, comprising a group of unicellular nitrogen-fixing Cyanobacteria.</title>
        <authorList>
            <person name="Bandyopadhyay A."/>
            <person name="Elvitigala T."/>
            <person name="Welsh E."/>
            <person name="Stockel J."/>
            <person name="Liberton M."/>
            <person name="Min H."/>
            <person name="Sherman L.A."/>
            <person name="Pakrasi H.B."/>
        </authorList>
    </citation>
    <scope>NUCLEOTIDE SEQUENCE [LARGE SCALE GENOMIC DNA]</scope>
    <source>
        <strain>PCC 7425 / ATCC 29141</strain>
    </source>
</reference>
<feature type="chain" id="PRO_1000122911" description="Phosphoribosylaminoimidazole-succinocarboxamide synthase">
    <location>
        <begin position="1"/>
        <end position="242"/>
    </location>
</feature>
<organism>
    <name type="scientific">Cyanothece sp. (strain PCC 7425 / ATCC 29141)</name>
    <dbReference type="NCBI Taxonomy" id="395961"/>
    <lineage>
        <taxon>Bacteria</taxon>
        <taxon>Bacillati</taxon>
        <taxon>Cyanobacteriota</taxon>
        <taxon>Cyanophyceae</taxon>
        <taxon>Gomontiellales</taxon>
        <taxon>Cyanothecaceae</taxon>
        <taxon>Cyanothece</taxon>
    </lineage>
</organism>
<proteinExistence type="inferred from homology"/>
<protein>
    <recommendedName>
        <fullName evidence="1">Phosphoribosylaminoimidazole-succinocarboxamide synthase</fullName>
        <ecNumber evidence="1">6.3.2.6</ecNumber>
    </recommendedName>
    <alternativeName>
        <fullName evidence="1">SAICAR synthetase</fullName>
    </alternativeName>
</protein>
<name>PUR7_CYAP4</name>
<keyword id="KW-0067">ATP-binding</keyword>
<keyword id="KW-0436">Ligase</keyword>
<keyword id="KW-0547">Nucleotide-binding</keyword>
<keyword id="KW-0658">Purine biosynthesis</keyword>
<evidence type="ECO:0000255" key="1">
    <source>
        <dbReference type="HAMAP-Rule" id="MF_00137"/>
    </source>
</evidence>
<gene>
    <name evidence="1" type="primary">purC</name>
    <name type="ordered locus">Cyan7425_4496</name>
</gene>
<dbReference type="EC" id="6.3.2.6" evidence="1"/>
<dbReference type="EMBL" id="CP001344">
    <property type="protein sequence ID" value="ACL46806.1"/>
    <property type="molecule type" value="Genomic_DNA"/>
</dbReference>
<dbReference type="SMR" id="B8HK56"/>
<dbReference type="STRING" id="395961.Cyan7425_4496"/>
<dbReference type="KEGG" id="cyn:Cyan7425_4496"/>
<dbReference type="eggNOG" id="COG0152">
    <property type="taxonomic scope" value="Bacteria"/>
</dbReference>
<dbReference type="HOGENOM" id="CLU_061495_2_0_3"/>
<dbReference type="OrthoDB" id="9801549at2"/>
<dbReference type="UniPathway" id="UPA00074">
    <property type="reaction ID" value="UER00131"/>
</dbReference>
<dbReference type="GO" id="GO:0005524">
    <property type="term" value="F:ATP binding"/>
    <property type="evidence" value="ECO:0007669"/>
    <property type="project" value="UniProtKB-KW"/>
</dbReference>
<dbReference type="GO" id="GO:0004639">
    <property type="term" value="F:phosphoribosylaminoimidazolesuccinocarboxamide synthase activity"/>
    <property type="evidence" value="ECO:0007669"/>
    <property type="project" value="UniProtKB-UniRule"/>
</dbReference>
<dbReference type="GO" id="GO:0006189">
    <property type="term" value="P:'de novo' IMP biosynthetic process"/>
    <property type="evidence" value="ECO:0007669"/>
    <property type="project" value="UniProtKB-UniRule"/>
</dbReference>
<dbReference type="GO" id="GO:0009236">
    <property type="term" value="P:cobalamin biosynthetic process"/>
    <property type="evidence" value="ECO:0007669"/>
    <property type="project" value="InterPro"/>
</dbReference>
<dbReference type="CDD" id="cd01415">
    <property type="entry name" value="SAICAR_synt_PurC"/>
    <property type="match status" value="1"/>
</dbReference>
<dbReference type="FunFam" id="3.30.470.20:FF:000006">
    <property type="entry name" value="Phosphoribosylaminoimidazole-succinocarboxamide synthase"/>
    <property type="match status" value="1"/>
</dbReference>
<dbReference type="Gene3D" id="3.30.470.20">
    <property type="entry name" value="ATP-grasp fold, B domain"/>
    <property type="match status" value="1"/>
</dbReference>
<dbReference type="Gene3D" id="3.30.200.20">
    <property type="entry name" value="Phosphorylase Kinase, domain 1"/>
    <property type="match status" value="1"/>
</dbReference>
<dbReference type="HAMAP" id="MF_00137">
    <property type="entry name" value="SAICAR_synth"/>
    <property type="match status" value="1"/>
</dbReference>
<dbReference type="InterPro" id="IPR028923">
    <property type="entry name" value="SAICAR_synt/ADE2_N"/>
</dbReference>
<dbReference type="InterPro" id="IPR033934">
    <property type="entry name" value="SAICAR_synt_PurC"/>
</dbReference>
<dbReference type="InterPro" id="IPR001636">
    <property type="entry name" value="SAICAR_synth"/>
</dbReference>
<dbReference type="InterPro" id="IPR050089">
    <property type="entry name" value="SAICAR_synthetase"/>
</dbReference>
<dbReference type="InterPro" id="IPR018236">
    <property type="entry name" value="SAICAR_synthetase_CS"/>
</dbReference>
<dbReference type="NCBIfam" id="TIGR00081">
    <property type="entry name" value="purC"/>
    <property type="match status" value="1"/>
</dbReference>
<dbReference type="PANTHER" id="PTHR43599">
    <property type="entry name" value="MULTIFUNCTIONAL PROTEIN ADE2"/>
    <property type="match status" value="1"/>
</dbReference>
<dbReference type="PANTHER" id="PTHR43599:SF3">
    <property type="entry name" value="SI:DKEY-6E2.2"/>
    <property type="match status" value="1"/>
</dbReference>
<dbReference type="Pfam" id="PF01259">
    <property type="entry name" value="SAICAR_synt"/>
    <property type="match status" value="1"/>
</dbReference>
<dbReference type="SUPFAM" id="SSF56104">
    <property type="entry name" value="SAICAR synthase-like"/>
    <property type="match status" value="1"/>
</dbReference>
<dbReference type="PROSITE" id="PS01057">
    <property type="entry name" value="SAICAR_SYNTHETASE_1"/>
    <property type="match status" value="1"/>
</dbReference>
<dbReference type="PROSITE" id="PS01058">
    <property type="entry name" value="SAICAR_SYNTHETASE_2"/>
    <property type="match status" value="1"/>
</dbReference>
<comment type="catalytic activity">
    <reaction evidence="1">
        <text>5-amino-1-(5-phospho-D-ribosyl)imidazole-4-carboxylate + L-aspartate + ATP = (2S)-2-[5-amino-1-(5-phospho-beta-D-ribosyl)imidazole-4-carboxamido]succinate + ADP + phosphate + 2 H(+)</text>
        <dbReference type="Rhea" id="RHEA:22628"/>
        <dbReference type="ChEBI" id="CHEBI:15378"/>
        <dbReference type="ChEBI" id="CHEBI:29991"/>
        <dbReference type="ChEBI" id="CHEBI:30616"/>
        <dbReference type="ChEBI" id="CHEBI:43474"/>
        <dbReference type="ChEBI" id="CHEBI:58443"/>
        <dbReference type="ChEBI" id="CHEBI:77657"/>
        <dbReference type="ChEBI" id="CHEBI:456216"/>
        <dbReference type="EC" id="6.3.2.6"/>
    </reaction>
</comment>
<comment type="pathway">
    <text evidence="1">Purine metabolism; IMP biosynthesis via de novo pathway; 5-amino-1-(5-phospho-D-ribosyl)imidazole-4-carboxamide from 5-amino-1-(5-phospho-D-ribosyl)imidazole-4-carboxylate: step 1/2.</text>
</comment>
<comment type="similarity">
    <text evidence="1">Belongs to the SAICAR synthetase family.</text>
</comment>
<accession>B8HK56</accession>